<organism>
    <name type="scientific">Vesicomyosocius okutanii subsp. Calyptogena okutanii (strain HA)</name>
    <dbReference type="NCBI Taxonomy" id="412965"/>
    <lineage>
        <taxon>Bacteria</taxon>
        <taxon>Pseudomonadati</taxon>
        <taxon>Pseudomonadota</taxon>
        <taxon>Gammaproteobacteria</taxon>
        <taxon>Candidatus Pseudothioglobaceae</taxon>
        <taxon>Candidatus Vesicomyosocius</taxon>
    </lineage>
</organism>
<keyword id="KW-0255">Endonuclease</keyword>
<keyword id="KW-0378">Hydrolase</keyword>
<keyword id="KW-0540">Nuclease</keyword>
<keyword id="KW-1185">Reference proteome</keyword>
<keyword id="KW-0694">RNA-binding</keyword>
<keyword id="KW-0819">tRNA processing</keyword>
<protein>
    <recommendedName>
        <fullName evidence="1">Ribonuclease P protein component</fullName>
        <shortName evidence="1">RNase P protein</shortName>
        <shortName evidence="1">RNaseP protein</shortName>
        <ecNumber evidence="1">3.1.26.5</ecNumber>
    </recommendedName>
    <alternativeName>
        <fullName evidence="1">Protein C5</fullName>
    </alternativeName>
</protein>
<feature type="chain" id="PRO_1000100407" description="Ribonuclease P protein component">
    <location>
        <begin position="1"/>
        <end position="113"/>
    </location>
</feature>
<evidence type="ECO:0000255" key="1">
    <source>
        <dbReference type="HAMAP-Rule" id="MF_00227"/>
    </source>
</evidence>
<proteinExistence type="inferred from homology"/>
<comment type="function">
    <text evidence="1">RNaseP catalyzes the removal of the 5'-leader sequence from pre-tRNA to produce the mature 5'-terminus. It can also cleave other RNA substrates such as 4.5S RNA. The protein component plays an auxiliary but essential role in vivo by binding to the 5'-leader sequence and broadening the substrate specificity of the ribozyme.</text>
</comment>
<comment type="catalytic activity">
    <reaction evidence="1">
        <text>Endonucleolytic cleavage of RNA, removing 5'-extranucleotides from tRNA precursor.</text>
        <dbReference type="EC" id="3.1.26.5"/>
    </reaction>
</comment>
<comment type="subunit">
    <text evidence="1">Consists of a catalytic RNA component (M1 or rnpB) and a protein subunit.</text>
</comment>
<comment type="similarity">
    <text evidence="1">Belongs to the RnpA family.</text>
</comment>
<gene>
    <name evidence="1" type="primary">rnpA</name>
    <name type="ordered locus">COSY_0939</name>
</gene>
<sequence length="113" mass="13526">MSFRLTRNLRVLKPFDYKTIFKHGKIIKGQYWQVLARKIDTPEPRLGLAISKKVHRLAIDRNKTKRIARETFRTHQNDLNHWEFIVMAEHSKPAKNSIMTNDLLHLFKKIITY</sequence>
<name>RNPA_VESOH</name>
<dbReference type="EC" id="3.1.26.5" evidence="1"/>
<dbReference type="EMBL" id="AP009247">
    <property type="protein sequence ID" value="BAF62038.1"/>
    <property type="molecule type" value="Genomic_DNA"/>
</dbReference>
<dbReference type="RefSeq" id="WP_011930307.1">
    <property type="nucleotide sequence ID" value="NC_009465.1"/>
</dbReference>
<dbReference type="SMR" id="A5CVI0"/>
<dbReference type="STRING" id="412965.COSY_0939"/>
<dbReference type="KEGG" id="vok:COSY_0939"/>
<dbReference type="eggNOG" id="COG0594">
    <property type="taxonomic scope" value="Bacteria"/>
</dbReference>
<dbReference type="HOGENOM" id="CLU_117179_11_0_6"/>
<dbReference type="OrthoDB" id="9796422at2"/>
<dbReference type="Proteomes" id="UP000000247">
    <property type="component" value="Chromosome"/>
</dbReference>
<dbReference type="GO" id="GO:0030677">
    <property type="term" value="C:ribonuclease P complex"/>
    <property type="evidence" value="ECO:0007669"/>
    <property type="project" value="TreeGrafter"/>
</dbReference>
<dbReference type="GO" id="GO:0042781">
    <property type="term" value="F:3'-tRNA processing endoribonuclease activity"/>
    <property type="evidence" value="ECO:0007669"/>
    <property type="project" value="TreeGrafter"/>
</dbReference>
<dbReference type="GO" id="GO:0004526">
    <property type="term" value="F:ribonuclease P activity"/>
    <property type="evidence" value="ECO:0007669"/>
    <property type="project" value="UniProtKB-UniRule"/>
</dbReference>
<dbReference type="GO" id="GO:0000049">
    <property type="term" value="F:tRNA binding"/>
    <property type="evidence" value="ECO:0007669"/>
    <property type="project" value="UniProtKB-UniRule"/>
</dbReference>
<dbReference type="GO" id="GO:0001682">
    <property type="term" value="P:tRNA 5'-leader removal"/>
    <property type="evidence" value="ECO:0007669"/>
    <property type="project" value="UniProtKB-UniRule"/>
</dbReference>
<dbReference type="Gene3D" id="3.30.230.10">
    <property type="match status" value="1"/>
</dbReference>
<dbReference type="HAMAP" id="MF_00227">
    <property type="entry name" value="RNase_P"/>
    <property type="match status" value="1"/>
</dbReference>
<dbReference type="InterPro" id="IPR020568">
    <property type="entry name" value="Ribosomal_Su5_D2-typ_SF"/>
</dbReference>
<dbReference type="InterPro" id="IPR014721">
    <property type="entry name" value="Ribsml_uS5_D2-typ_fold_subgr"/>
</dbReference>
<dbReference type="InterPro" id="IPR000100">
    <property type="entry name" value="RNase_P"/>
</dbReference>
<dbReference type="NCBIfam" id="TIGR00188">
    <property type="entry name" value="rnpA"/>
    <property type="match status" value="1"/>
</dbReference>
<dbReference type="PANTHER" id="PTHR33992">
    <property type="entry name" value="RIBONUCLEASE P PROTEIN COMPONENT"/>
    <property type="match status" value="1"/>
</dbReference>
<dbReference type="PANTHER" id="PTHR33992:SF1">
    <property type="entry name" value="RIBONUCLEASE P PROTEIN COMPONENT"/>
    <property type="match status" value="1"/>
</dbReference>
<dbReference type="Pfam" id="PF00825">
    <property type="entry name" value="Ribonuclease_P"/>
    <property type="match status" value="1"/>
</dbReference>
<dbReference type="SUPFAM" id="SSF54211">
    <property type="entry name" value="Ribosomal protein S5 domain 2-like"/>
    <property type="match status" value="1"/>
</dbReference>
<reference key="1">
    <citation type="journal article" date="2007" name="Curr. Biol.">
        <title>Reduced genome of the thioautotrophic intracellular symbiont in a deep-sea clam, Calyptogena okutanii.</title>
        <authorList>
            <person name="Kuwahara H."/>
            <person name="Yoshida T."/>
            <person name="Takaki Y."/>
            <person name="Shimamura S."/>
            <person name="Nishi S."/>
            <person name="Harada M."/>
            <person name="Matsuyama K."/>
            <person name="Takishita K."/>
            <person name="Kawato M."/>
            <person name="Uematsu K."/>
            <person name="Fujiwara Y."/>
            <person name="Sato T."/>
            <person name="Kato C."/>
            <person name="Kitagawa M."/>
            <person name="Kato I."/>
            <person name="Maruyama T."/>
        </authorList>
    </citation>
    <scope>NUCLEOTIDE SEQUENCE [LARGE SCALE GENOMIC DNA]</scope>
    <source>
        <strain>HA</strain>
    </source>
</reference>
<accession>A5CVI0</accession>